<reference key="1">
    <citation type="journal article" date="2002" name="Nature">
        <title>Comparison of the genomes of two Xanthomonas pathogens with differing host specificities.</title>
        <authorList>
            <person name="da Silva A.C.R."/>
            <person name="Ferro J.A."/>
            <person name="Reinach F.C."/>
            <person name="Farah C.S."/>
            <person name="Furlan L.R."/>
            <person name="Quaggio R.B."/>
            <person name="Monteiro-Vitorello C.B."/>
            <person name="Van Sluys M.A."/>
            <person name="Almeida N.F. Jr."/>
            <person name="Alves L.M.C."/>
            <person name="do Amaral A.M."/>
            <person name="Bertolini M.C."/>
            <person name="Camargo L.E.A."/>
            <person name="Camarotte G."/>
            <person name="Cannavan F."/>
            <person name="Cardozo J."/>
            <person name="Chambergo F."/>
            <person name="Ciapina L.P."/>
            <person name="Cicarelli R.M.B."/>
            <person name="Coutinho L.L."/>
            <person name="Cursino-Santos J.R."/>
            <person name="El-Dorry H."/>
            <person name="Faria J.B."/>
            <person name="Ferreira A.J.S."/>
            <person name="Ferreira R.C.C."/>
            <person name="Ferro M.I.T."/>
            <person name="Formighieri E.F."/>
            <person name="Franco M.C."/>
            <person name="Greggio C.C."/>
            <person name="Gruber A."/>
            <person name="Katsuyama A.M."/>
            <person name="Kishi L.T."/>
            <person name="Leite R.P."/>
            <person name="Lemos E.G.M."/>
            <person name="Lemos M.V.F."/>
            <person name="Locali E.C."/>
            <person name="Machado M.A."/>
            <person name="Madeira A.M.B.N."/>
            <person name="Martinez-Rossi N.M."/>
            <person name="Martins E.C."/>
            <person name="Meidanis J."/>
            <person name="Menck C.F.M."/>
            <person name="Miyaki C.Y."/>
            <person name="Moon D.H."/>
            <person name="Moreira L.M."/>
            <person name="Novo M.T.M."/>
            <person name="Okura V.K."/>
            <person name="Oliveira M.C."/>
            <person name="Oliveira V.R."/>
            <person name="Pereira H.A."/>
            <person name="Rossi A."/>
            <person name="Sena J.A.D."/>
            <person name="Silva C."/>
            <person name="de Souza R.F."/>
            <person name="Spinola L.A.F."/>
            <person name="Takita M.A."/>
            <person name="Tamura R.E."/>
            <person name="Teixeira E.C."/>
            <person name="Tezza R.I.D."/>
            <person name="Trindade dos Santos M."/>
            <person name="Truffi D."/>
            <person name="Tsai S.M."/>
            <person name="White F.F."/>
            <person name="Setubal J.C."/>
            <person name="Kitajima J.P."/>
        </authorList>
    </citation>
    <scope>NUCLEOTIDE SEQUENCE [LARGE SCALE GENOMIC DNA]</scope>
    <source>
        <strain>306</strain>
    </source>
</reference>
<dbReference type="EC" id="6.3.2.6" evidence="1"/>
<dbReference type="EMBL" id="AE008923">
    <property type="protein sequence ID" value="AAM35361.1"/>
    <property type="molecule type" value="Genomic_DNA"/>
</dbReference>
<dbReference type="SMR" id="Q8PQ58"/>
<dbReference type="KEGG" id="xac:XAC0470"/>
<dbReference type="eggNOG" id="COG0152">
    <property type="taxonomic scope" value="Bacteria"/>
</dbReference>
<dbReference type="HOGENOM" id="CLU_045637_0_2_6"/>
<dbReference type="UniPathway" id="UPA00074">
    <property type="reaction ID" value="UER00131"/>
</dbReference>
<dbReference type="Proteomes" id="UP000000576">
    <property type="component" value="Chromosome"/>
</dbReference>
<dbReference type="GO" id="GO:0005737">
    <property type="term" value="C:cytoplasm"/>
    <property type="evidence" value="ECO:0007669"/>
    <property type="project" value="TreeGrafter"/>
</dbReference>
<dbReference type="GO" id="GO:0005524">
    <property type="term" value="F:ATP binding"/>
    <property type="evidence" value="ECO:0007669"/>
    <property type="project" value="UniProtKB-KW"/>
</dbReference>
<dbReference type="GO" id="GO:0004639">
    <property type="term" value="F:phosphoribosylaminoimidazolesuccinocarboxamide synthase activity"/>
    <property type="evidence" value="ECO:0007669"/>
    <property type="project" value="UniProtKB-UniRule"/>
</dbReference>
<dbReference type="GO" id="GO:0006189">
    <property type="term" value="P:'de novo' IMP biosynthetic process"/>
    <property type="evidence" value="ECO:0007669"/>
    <property type="project" value="UniProtKB-UniRule"/>
</dbReference>
<dbReference type="CDD" id="cd01414">
    <property type="entry name" value="SAICAR_synt_Sc"/>
    <property type="match status" value="1"/>
</dbReference>
<dbReference type="FunFam" id="3.30.200.20:FF:000365">
    <property type="entry name" value="Phosphoribosylaminoimidazole-succinocarboxamide synthase"/>
    <property type="match status" value="1"/>
</dbReference>
<dbReference type="FunFam" id="3.30.470.20:FF:000015">
    <property type="entry name" value="Phosphoribosylaminoimidazole-succinocarboxamide synthase"/>
    <property type="match status" value="1"/>
</dbReference>
<dbReference type="Gene3D" id="3.30.470.20">
    <property type="entry name" value="ATP-grasp fold, B domain"/>
    <property type="match status" value="1"/>
</dbReference>
<dbReference type="Gene3D" id="3.30.200.20">
    <property type="entry name" value="Phosphorylase Kinase, domain 1"/>
    <property type="match status" value="1"/>
</dbReference>
<dbReference type="HAMAP" id="MF_00137">
    <property type="entry name" value="SAICAR_synth"/>
    <property type="match status" value="1"/>
</dbReference>
<dbReference type="InterPro" id="IPR028923">
    <property type="entry name" value="SAICAR_synt/ADE2_N"/>
</dbReference>
<dbReference type="InterPro" id="IPR001636">
    <property type="entry name" value="SAICAR_synth"/>
</dbReference>
<dbReference type="InterPro" id="IPR018236">
    <property type="entry name" value="SAICAR_synthetase_CS"/>
</dbReference>
<dbReference type="NCBIfam" id="NF010568">
    <property type="entry name" value="PRK13961.1"/>
    <property type="match status" value="1"/>
</dbReference>
<dbReference type="NCBIfam" id="TIGR00081">
    <property type="entry name" value="purC"/>
    <property type="match status" value="1"/>
</dbReference>
<dbReference type="PANTHER" id="PTHR43700">
    <property type="entry name" value="PHOSPHORIBOSYLAMINOIMIDAZOLE-SUCCINOCARBOXAMIDE SYNTHASE"/>
    <property type="match status" value="1"/>
</dbReference>
<dbReference type="PANTHER" id="PTHR43700:SF1">
    <property type="entry name" value="PHOSPHORIBOSYLAMINOIMIDAZOLE-SUCCINOCARBOXAMIDE SYNTHASE"/>
    <property type="match status" value="1"/>
</dbReference>
<dbReference type="Pfam" id="PF01259">
    <property type="entry name" value="SAICAR_synt"/>
    <property type="match status" value="1"/>
</dbReference>
<dbReference type="SUPFAM" id="SSF56104">
    <property type="entry name" value="SAICAR synthase-like"/>
    <property type="match status" value="1"/>
</dbReference>
<dbReference type="PROSITE" id="PS01057">
    <property type="entry name" value="SAICAR_SYNTHETASE_1"/>
    <property type="match status" value="1"/>
</dbReference>
<dbReference type="PROSITE" id="PS01058">
    <property type="entry name" value="SAICAR_SYNTHETASE_2"/>
    <property type="match status" value="1"/>
</dbReference>
<accession>Q8PQ58</accession>
<gene>
    <name evidence="1" type="primary">purC</name>
    <name type="ordered locus">XAC0470</name>
</gene>
<proteinExistence type="inferred from homology"/>
<organism>
    <name type="scientific">Xanthomonas axonopodis pv. citri (strain 306)</name>
    <dbReference type="NCBI Taxonomy" id="190486"/>
    <lineage>
        <taxon>Bacteria</taxon>
        <taxon>Pseudomonadati</taxon>
        <taxon>Pseudomonadota</taxon>
        <taxon>Gammaproteobacteria</taxon>
        <taxon>Lysobacterales</taxon>
        <taxon>Lysobacteraceae</taxon>
        <taxon>Xanthomonas</taxon>
    </lineage>
</organism>
<sequence length="310" mass="34589">MPVSTTLLQSDLPGLPLRHRGKVRDVFDIPRDRLPADAPPGDYLLMVATDRLSAFDVVLPDPIPGKGEMLCQVSNFWFHKTEHLMPNHLVDIRVEQVLPEGVDPALYAKRAVVTRKLKPVPVEAIARGYVIGSGWKDYQRTGKISGIELPDGLRQAEKLPEPIFTPSTKAAVGDHDENIDFDAMVKTVGAELAERVRDATLRIYRFAADFAAERGILLADTKFEFGTDADGRLYIMDEMLTPDSSRYWPADQYEPGTSPPSYDKQFVRDYLETLDWGKTAPGPRLPADVIDRTRAKYAEALQRLAGISVD</sequence>
<protein>
    <recommendedName>
        <fullName evidence="1">Phosphoribosylaminoimidazole-succinocarboxamide synthase</fullName>
        <ecNumber evidence="1">6.3.2.6</ecNumber>
    </recommendedName>
    <alternativeName>
        <fullName evidence="1">SAICAR synthetase</fullName>
    </alternativeName>
</protein>
<comment type="catalytic activity">
    <reaction evidence="1">
        <text>5-amino-1-(5-phospho-D-ribosyl)imidazole-4-carboxylate + L-aspartate + ATP = (2S)-2-[5-amino-1-(5-phospho-beta-D-ribosyl)imidazole-4-carboxamido]succinate + ADP + phosphate + 2 H(+)</text>
        <dbReference type="Rhea" id="RHEA:22628"/>
        <dbReference type="ChEBI" id="CHEBI:15378"/>
        <dbReference type="ChEBI" id="CHEBI:29991"/>
        <dbReference type="ChEBI" id="CHEBI:30616"/>
        <dbReference type="ChEBI" id="CHEBI:43474"/>
        <dbReference type="ChEBI" id="CHEBI:58443"/>
        <dbReference type="ChEBI" id="CHEBI:77657"/>
        <dbReference type="ChEBI" id="CHEBI:456216"/>
        <dbReference type="EC" id="6.3.2.6"/>
    </reaction>
</comment>
<comment type="pathway">
    <text evidence="1">Purine metabolism; IMP biosynthesis via de novo pathway; 5-amino-1-(5-phospho-D-ribosyl)imidazole-4-carboxamide from 5-amino-1-(5-phospho-D-ribosyl)imidazole-4-carboxylate: step 1/2.</text>
</comment>
<comment type="similarity">
    <text evidence="1">Belongs to the SAICAR synthetase family.</text>
</comment>
<evidence type="ECO:0000255" key="1">
    <source>
        <dbReference type="HAMAP-Rule" id="MF_00137"/>
    </source>
</evidence>
<keyword id="KW-0067">ATP-binding</keyword>
<keyword id="KW-0436">Ligase</keyword>
<keyword id="KW-0547">Nucleotide-binding</keyword>
<keyword id="KW-0658">Purine biosynthesis</keyword>
<feature type="chain" id="PRO_0000100901" description="Phosphoribosylaminoimidazole-succinocarboxamide synthase">
    <location>
        <begin position="1"/>
        <end position="310"/>
    </location>
</feature>
<name>PUR7_XANAC</name>